<keyword id="KW-0050">Antiport</keyword>
<keyword id="KW-1003">Cell membrane</keyword>
<keyword id="KW-0406">Ion transport</keyword>
<keyword id="KW-0472">Membrane</keyword>
<keyword id="KW-0812">Transmembrane</keyword>
<keyword id="KW-1133">Transmembrane helix</keyword>
<keyword id="KW-0813">Transport</keyword>
<accession>Q6GJ46</accession>
<dbReference type="EMBL" id="BX571856">
    <property type="protein sequence ID" value="CAG39649.1"/>
    <property type="molecule type" value="Genomic_DNA"/>
</dbReference>
<dbReference type="RefSeq" id="WP_000661909.1">
    <property type="nucleotide sequence ID" value="NC_002952.2"/>
</dbReference>
<dbReference type="SMR" id="Q6GJ46"/>
<dbReference type="KEGG" id="sar:SAR0631"/>
<dbReference type="HOGENOM" id="CLU_101659_1_1_9"/>
<dbReference type="Proteomes" id="UP000000596">
    <property type="component" value="Chromosome"/>
</dbReference>
<dbReference type="GO" id="GO:0005886">
    <property type="term" value="C:plasma membrane"/>
    <property type="evidence" value="ECO:0007669"/>
    <property type="project" value="UniProtKB-SubCell"/>
</dbReference>
<dbReference type="GO" id="GO:0015297">
    <property type="term" value="F:antiporter activity"/>
    <property type="evidence" value="ECO:0007669"/>
    <property type="project" value="UniProtKB-KW"/>
</dbReference>
<dbReference type="GO" id="GO:0006811">
    <property type="term" value="P:monoatomic ion transport"/>
    <property type="evidence" value="ECO:0007669"/>
    <property type="project" value="UniProtKB-KW"/>
</dbReference>
<dbReference type="InterPro" id="IPR050622">
    <property type="entry name" value="CPA3_antiporter_subunitB"/>
</dbReference>
<dbReference type="InterPro" id="IPR007182">
    <property type="entry name" value="MnhB"/>
</dbReference>
<dbReference type="NCBIfam" id="NF009223">
    <property type="entry name" value="PRK12573.1"/>
    <property type="match status" value="1"/>
</dbReference>
<dbReference type="NCBIfam" id="NF009224">
    <property type="entry name" value="PRK12574.1"/>
    <property type="match status" value="1"/>
</dbReference>
<dbReference type="PANTHER" id="PTHR33932">
    <property type="entry name" value="NA(+)/H(+) ANTIPORTER SUBUNIT B"/>
    <property type="match status" value="1"/>
</dbReference>
<dbReference type="PANTHER" id="PTHR33932:SF4">
    <property type="entry name" value="NA(+)_H(+) ANTIPORTER SUBUNIT B"/>
    <property type="match status" value="1"/>
</dbReference>
<dbReference type="Pfam" id="PF04039">
    <property type="entry name" value="MnhB"/>
    <property type="match status" value="1"/>
</dbReference>
<name>MNHB2_STAAR</name>
<sequence length="141" mass="15380">MKENDVVLRTVTKLVVFILLTFGFYVFFAGHNNPGGGFIGGLIFSSAFILMFLAFNVEEVLESLPIDFRILMIIGALVSSITAIMPTFFGKPFLSQYETTLTLPILGHIHVTTITLFELGILFSVVGVIVTVMLSLSGGRS</sequence>
<gene>
    <name type="primary">mnhB2</name>
    <name type="synonym">mrpB2</name>
    <name type="ordered locus">SAR0631</name>
</gene>
<comment type="subunit">
    <text evidence="1">May form a heterooligomeric complex that consists of seven subunits: mnhA2, mnhB2, mnhC2, mnhD2, mnhE2, mnhF2 and mnhG2.</text>
</comment>
<comment type="subcellular location">
    <subcellularLocation>
        <location evidence="3">Cell membrane</location>
        <topology evidence="3">Multi-pass membrane protein</topology>
    </subcellularLocation>
</comment>
<comment type="similarity">
    <text evidence="3">Belongs to the CPA3 antiporters (TC 2.A.63) subunit B family.</text>
</comment>
<evidence type="ECO:0000250" key="1"/>
<evidence type="ECO:0000255" key="2"/>
<evidence type="ECO:0000305" key="3"/>
<reference key="1">
    <citation type="journal article" date="2004" name="Proc. Natl. Acad. Sci. U.S.A.">
        <title>Complete genomes of two clinical Staphylococcus aureus strains: evidence for the rapid evolution of virulence and drug resistance.</title>
        <authorList>
            <person name="Holden M.T.G."/>
            <person name="Feil E.J."/>
            <person name="Lindsay J.A."/>
            <person name="Peacock S.J."/>
            <person name="Day N.P.J."/>
            <person name="Enright M.C."/>
            <person name="Foster T.J."/>
            <person name="Moore C.E."/>
            <person name="Hurst L."/>
            <person name="Atkin R."/>
            <person name="Barron A."/>
            <person name="Bason N."/>
            <person name="Bentley S.D."/>
            <person name="Chillingworth C."/>
            <person name="Chillingworth T."/>
            <person name="Churcher C."/>
            <person name="Clark L."/>
            <person name="Corton C."/>
            <person name="Cronin A."/>
            <person name="Doggett J."/>
            <person name="Dowd L."/>
            <person name="Feltwell T."/>
            <person name="Hance Z."/>
            <person name="Harris B."/>
            <person name="Hauser H."/>
            <person name="Holroyd S."/>
            <person name="Jagels K."/>
            <person name="James K.D."/>
            <person name="Lennard N."/>
            <person name="Line A."/>
            <person name="Mayes R."/>
            <person name="Moule S."/>
            <person name="Mungall K."/>
            <person name="Ormond D."/>
            <person name="Quail M.A."/>
            <person name="Rabbinowitsch E."/>
            <person name="Rutherford K.M."/>
            <person name="Sanders M."/>
            <person name="Sharp S."/>
            <person name="Simmonds M."/>
            <person name="Stevens K."/>
            <person name="Whitehead S."/>
            <person name="Barrell B.G."/>
            <person name="Spratt B.G."/>
            <person name="Parkhill J."/>
        </authorList>
    </citation>
    <scope>NUCLEOTIDE SEQUENCE [LARGE SCALE GENOMIC DNA]</scope>
    <source>
        <strain>MRSA252</strain>
    </source>
</reference>
<proteinExistence type="inferred from homology"/>
<protein>
    <recommendedName>
        <fullName>Putative antiporter subunit mnhB2</fullName>
    </recommendedName>
    <alternativeName>
        <fullName>Mrp complex subunit B2</fullName>
    </alternativeName>
    <alternativeName>
        <fullName>Putative NADH-ubiquinone oxidoreductase subunit mnhB2</fullName>
    </alternativeName>
</protein>
<organism>
    <name type="scientific">Staphylococcus aureus (strain MRSA252)</name>
    <dbReference type="NCBI Taxonomy" id="282458"/>
    <lineage>
        <taxon>Bacteria</taxon>
        <taxon>Bacillati</taxon>
        <taxon>Bacillota</taxon>
        <taxon>Bacilli</taxon>
        <taxon>Bacillales</taxon>
        <taxon>Staphylococcaceae</taxon>
        <taxon>Staphylococcus</taxon>
    </lineage>
</organism>
<feature type="chain" id="PRO_0000372271" description="Putative antiporter subunit mnhB2">
    <location>
        <begin position="1"/>
        <end position="141"/>
    </location>
</feature>
<feature type="transmembrane region" description="Helical" evidence="2">
    <location>
        <begin position="10"/>
        <end position="30"/>
    </location>
</feature>
<feature type="transmembrane region" description="Helical" evidence="2">
    <location>
        <begin position="35"/>
        <end position="55"/>
    </location>
</feature>
<feature type="transmembrane region" description="Helical" evidence="2">
    <location>
        <begin position="70"/>
        <end position="90"/>
    </location>
</feature>
<feature type="transmembrane region" description="Helical" evidence="2">
    <location>
        <begin position="114"/>
        <end position="134"/>
    </location>
</feature>